<evidence type="ECO:0000250" key="1"/>
<evidence type="ECO:0000255" key="2"/>
<evidence type="ECO:0000256" key="3">
    <source>
        <dbReference type="SAM" id="MobiDB-lite"/>
    </source>
</evidence>
<evidence type="ECO:0000305" key="4"/>
<keyword id="KW-0326">Glycosidase</keyword>
<keyword id="KW-0378">Hydrolase</keyword>
<keyword id="KW-1185">Reference proteome</keyword>
<keyword id="KW-0964">Secreted</keyword>
<keyword id="KW-0732">Signal</keyword>
<comment type="function">
    <text evidence="1">Is able to cleave peptidoglycan and affects clumping and separation of bacterial cells.</text>
</comment>
<comment type="subcellular location">
    <subcellularLocation>
        <location evidence="1">Secreted</location>
    </subcellularLocation>
</comment>
<comment type="similarity">
    <text evidence="4">Belongs to the transglycosylase family. SceD subfamily.</text>
</comment>
<reference key="1">
    <citation type="journal article" date="2005" name="Proc. Natl. Acad. Sci. U.S.A.">
        <title>Whole genome sequence of Staphylococcus saprophyticus reveals the pathogenesis of uncomplicated urinary tract infection.</title>
        <authorList>
            <person name="Kuroda M."/>
            <person name="Yamashita A."/>
            <person name="Hirakawa H."/>
            <person name="Kumano M."/>
            <person name="Morikawa K."/>
            <person name="Higashide M."/>
            <person name="Maruyama A."/>
            <person name="Inose Y."/>
            <person name="Matoba K."/>
            <person name="Toh H."/>
            <person name="Kuhara S."/>
            <person name="Hattori M."/>
            <person name="Ohta T."/>
        </authorList>
    </citation>
    <scope>NUCLEOTIDE SEQUENCE [LARGE SCALE GENOMIC DNA]</scope>
    <source>
        <strain>ATCC 15305 / DSM 20229 / NCIMB 8711 / NCTC 7292 / S-41</strain>
    </source>
</reference>
<proteinExistence type="inferred from homology"/>
<dbReference type="EC" id="3.2.-.-"/>
<dbReference type="EMBL" id="AP008934">
    <property type="protein sequence ID" value="BAE17933.1"/>
    <property type="molecule type" value="Genomic_DNA"/>
</dbReference>
<dbReference type="RefSeq" id="WP_011302685.1">
    <property type="nucleotide sequence ID" value="NC_007350.1"/>
</dbReference>
<dbReference type="SMR" id="Q49Z43"/>
<dbReference type="GeneID" id="3615755"/>
<dbReference type="KEGG" id="ssp:SSP0788"/>
<dbReference type="PATRIC" id="fig|342451.11.peg.790"/>
<dbReference type="eggNOG" id="COG1388">
    <property type="taxonomic scope" value="Bacteria"/>
</dbReference>
<dbReference type="HOGENOM" id="CLU_099865_0_0_9"/>
<dbReference type="OrthoDB" id="2314263at2"/>
<dbReference type="Proteomes" id="UP000006371">
    <property type="component" value="Chromosome"/>
</dbReference>
<dbReference type="GO" id="GO:0005576">
    <property type="term" value="C:extracellular region"/>
    <property type="evidence" value="ECO:0007669"/>
    <property type="project" value="UniProtKB-SubCell"/>
</dbReference>
<dbReference type="GO" id="GO:0016798">
    <property type="term" value="F:hydrolase activity, acting on glycosyl bonds"/>
    <property type="evidence" value="ECO:0007669"/>
    <property type="project" value="UniProtKB-KW"/>
</dbReference>
<dbReference type="CDD" id="cd13925">
    <property type="entry name" value="RPF"/>
    <property type="match status" value="1"/>
</dbReference>
<dbReference type="Gene3D" id="1.10.530.10">
    <property type="match status" value="1"/>
</dbReference>
<dbReference type="InterPro" id="IPR023346">
    <property type="entry name" value="Lysozyme-like_dom_sf"/>
</dbReference>
<dbReference type="InterPro" id="IPR010618">
    <property type="entry name" value="RPF"/>
</dbReference>
<dbReference type="Pfam" id="PF06737">
    <property type="entry name" value="Transglycosylas"/>
    <property type="match status" value="1"/>
</dbReference>
<dbReference type="SUPFAM" id="SSF53955">
    <property type="entry name" value="Lysozyme-like"/>
    <property type="match status" value="1"/>
</dbReference>
<gene>
    <name type="primary">sceD3</name>
    <name type="ordered locus">SSP0788</name>
</gene>
<name>SCED3_STAS1</name>
<sequence length="238" mass="25001">MKKTVVASTLAVGLGVTGFAAGNSADASEQGVDKAQLAQQAQSNPESLNEAPVQDGAYNINFNYNNTDYSFQSDGQYWTWSYGQGSTNAPAQETAEQPQQVEQPQQTEQASTEQPAEEAAPQTEETQQPQQEATTQTTSSSNESTSNESSSSEASEGSSVNVNSHLQAIAQRESGGDLKAVNPSSGAAGKYQFLQSTWDSVAPSEYQGVSPTEAPEAVQDAAAVKLYNTAGASQWVTA</sequence>
<protein>
    <recommendedName>
        <fullName>Probable transglycosylase SceD 3</fullName>
        <ecNumber>3.2.-.-</ecNumber>
    </recommendedName>
</protein>
<feature type="signal peptide" evidence="2">
    <location>
        <begin position="1"/>
        <end position="27"/>
    </location>
</feature>
<feature type="chain" id="PRO_0000320323" description="Probable transglycosylase SceD 3">
    <location>
        <begin position="28"/>
        <end position="238"/>
    </location>
</feature>
<feature type="region of interest" description="Disordered" evidence="3">
    <location>
        <begin position="82"/>
        <end position="161"/>
    </location>
</feature>
<feature type="compositionally biased region" description="Low complexity" evidence="3">
    <location>
        <begin position="89"/>
        <end position="156"/>
    </location>
</feature>
<accession>Q49Z43</accession>
<organism>
    <name type="scientific">Staphylococcus saprophyticus subsp. saprophyticus (strain ATCC 15305 / DSM 20229 / NCIMB 8711 / NCTC 7292 / S-41)</name>
    <dbReference type="NCBI Taxonomy" id="342451"/>
    <lineage>
        <taxon>Bacteria</taxon>
        <taxon>Bacillati</taxon>
        <taxon>Bacillota</taxon>
        <taxon>Bacilli</taxon>
        <taxon>Bacillales</taxon>
        <taxon>Staphylococcaceae</taxon>
        <taxon>Staphylococcus</taxon>
    </lineage>
</organism>